<dbReference type="EC" id="2.5.1.6" evidence="1"/>
<dbReference type="EMBL" id="CP000020">
    <property type="protein sequence ID" value="AAW84934.1"/>
    <property type="molecule type" value="Genomic_DNA"/>
</dbReference>
<dbReference type="RefSeq" id="WP_005417583.1">
    <property type="nucleotide sequence ID" value="NZ_CAWLES010000001.1"/>
</dbReference>
<dbReference type="RefSeq" id="YP_203822.1">
    <property type="nucleotide sequence ID" value="NC_006840.2"/>
</dbReference>
<dbReference type="SMR" id="Q5E7R2"/>
<dbReference type="STRING" id="312309.VF_0439"/>
<dbReference type="EnsemblBacteria" id="AAW84934">
    <property type="protein sequence ID" value="AAW84934"/>
    <property type="gene ID" value="VF_0439"/>
</dbReference>
<dbReference type="GeneID" id="54163076"/>
<dbReference type="KEGG" id="vfi:VF_0439"/>
<dbReference type="PATRIC" id="fig|312309.11.peg.429"/>
<dbReference type="eggNOG" id="COG0192">
    <property type="taxonomic scope" value="Bacteria"/>
</dbReference>
<dbReference type="HOGENOM" id="CLU_041802_1_1_6"/>
<dbReference type="OrthoDB" id="9801686at2"/>
<dbReference type="UniPathway" id="UPA00315">
    <property type="reaction ID" value="UER00080"/>
</dbReference>
<dbReference type="Proteomes" id="UP000000537">
    <property type="component" value="Chromosome I"/>
</dbReference>
<dbReference type="GO" id="GO:0005737">
    <property type="term" value="C:cytoplasm"/>
    <property type="evidence" value="ECO:0007669"/>
    <property type="project" value="UniProtKB-SubCell"/>
</dbReference>
<dbReference type="GO" id="GO:0005524">
    <property type="term" value="F:ATP binding"/>
    <property type="evidence" value="ECO:0007669"/>
    <property type="project" value="UniProtKB-UniRule"/>
</dbReference>
<dbReference type="GO" id="GO:0000287">
    <property type="term" value="F:magnesium ion binding"/>
    <property type="evidence" value="ECO:0007669"/>
    <property type="project" value="UniProtKB-UniRule"/>
</dbReference>
<dbReference type="GO" id="GO:0004478">
    <property type="term" value="F:methionine adenosyltransferase activity"/>
    <property type="evidence" value="ECO:0007669"/>
    <property type="project" value="UniProtKB-UniRule"/>
</dbReference>
<dbReference type="GO" id="GO:0006730">
    <property type="term" value="P:one-carbon metabolic process"/>
    <property type="evidence" value="ECO:0007669"/>
    <property type="project" value="UniProtKB-KW"/>
</dbReference>
<dbReference type="GO" id="GO:0006556">
    <property type="term" value="P:S-adenosylmethionine biosynthetic process"/>
    <property type="evidence" value="ECO:0007669"/>
    <property type="project" value="UniProtKB-UniRule"/>
</dbReference>
<dbReference type="CDD" id="cd18079">
    <property type="entry name" value="S-AdoMet_synt"/>
    <property type="match status" value="1"/>
</dbReference>
<dbReference type="FunFam" id="3.30.300.10:FF:000001">
    <property type="entry name" value="S-adenosylmethionine synthase"/>
    <property type="match status" value="1"/>
</dbReference>
<dbReference type="FunFam" id="3.30.300.10:FF:000003">
    <property type="entry name" value="S-adenosylmethionine synthase"/>
    <property type="match status" value="1"/>
</dbReference>
<dbReference type="Gene3D" id="3.30.300.10">
    <property type="match status" value="3"/>
</dbReference>
<dbReference type="HAMAP" id="MF_00086">
    <property type="entry name" value="S_AdoMet_synth1"/>
    <property type="match status" value="1"/>
</dbReference>
<dbReference type="InterPro" id="IPR022631">
    <property type="entry name" value="ADOMET_SYNTHASE_CS"/>
</dbReference>
<dbReference type="InterPro" id="IPR022630">
    <property type="entry name" value="S-AdoMet_synt_C"/>
</dbReference>
<dbReference type="InterPro" id="IPR022629">
    <property type="entry name" value="S-AdoMet_synt_central"/>
</dbReference>
<dbReference type="InterPro" id="IPR022628">
    <property type="entry name" value="S-AdoMet_synt_N"/>
</dbReference>
<dbReference type="InterPro" id="IPR002133">
    <property type="entry name" value="S-AdoMet_synthetase"/>
</dbReference>
<dbReference type="InterPro" id="IPR022636">
    <property type="entry name" value="S-AdoMet_synthetase_sfam"/>
</dbReference>
<dbReference type="NCBIfam" id="TIGR01034">
    <property type="entry name" value="metK"/>
    <property type="match status" value="1"/>
</dbReference>
<dbReference type="PANTHER" id="PTHR11964">
    <property type="entry name" value="S-ADENOSYLMETHIONINE SYNTHETASE"/>
    <property type="match status" value="1"/>
</dbReference>
<dbReference type="Pfam" id="PF02773">
    <property type="entry name" value="S-AdoMet_synt_C"/>
    <property type="match status" value="1"/>
</dbReference>
<dbReference type="Pfam" id="PF02772">
    <property type="entry name" value="S-AdoMet_synt_M"/>
    <property type="match status" value="1"/>
</dbReference>
<dbReference type="Pfam" id="PF00438">
    <property type="entry name" value="S-AdoMet_synt_N"/>
    <property type="match status" value="1"/>
</dbReference>
<dbReference type="PIRSF" id="PIRSF000497">
    <property type="entry name" value="MAT"/>
    <property type="match status" value="1"/>
</dbReference>
<dbReference type="SUPFAM" id="SSF55973">
    <property type="entry name" value="S-adenosylmethionine synthetase"/>
    <property type="match status" value="3"/>
</dbReference>
<dbReference type="PROSITE" id="PS00376">
    <property type="entry name" value="ADOMET_SYNTHASE_1"/>
    <property type="match status" value="1"/>
</dbReference>
<dbReference type="PROSITE" id="PS00377">
    <property type="entry name" value="ADOMET_SYNTHASE_2"/>
    <property type="match status" value="1"/>
</dbReference>
<name>METK_ALIF1</name>
<feature type="chain" id="PRO_0000241057" description="S-adenosylmethionine synthase">
    <location>
        <begin position="1"/>
        <end position="384"/>
    </location>
</feature>
<feature type="region of interest" description="Flexible loop" evidence="1">
    <location>
        <begin position="99"/>
        <end position="109"/>
    </location>
</feature>
<feature type="binding site" description="in other chain" evidence="1">
    <location>
        <position position="15"/>
    </location>
    <ligand>
        <name>ATP</name>
        <dbReference type="ChEBI" id="CHEBI:30616"/>
        <note>ligand shared between two neighboring subunits</note>
    </ligand>
</feature>
<feature type="binding site" evidence="1">
    <location>
        <position position="17"/>
    </location>
    <ligand>
        <name>Mg(2+)</name>
        <dbReference type="ChEBI" id="CHEBI:18420"/>
    </ligand>
</feature>
<feature type="binding site" evidence="1">
    <location>
        <position position="43"/>
    </location>
    <ligand>
        <name>K(+)</name>
        <dbReference type="ChEBI" id="CHEBI:29103"/>
    </ligand>
</feature>
<feature type="binding site" description="in other chain" evidence="1">
    <location>
        <position position="56"/>
    </location>
    <ligand>
        <name>L-methionine</name>
        <dbReference type="ChEBI" id="CHEBI:57844"/>
        <note>ligand shared between two neighboring subunits</note>
    </ligand>
</feature>
<feature type="binding site" description="in other chain" evidence="1">
    <location>
        <position position="99"/>
    </location>
    <ligand>
        <name>L-methionine</name>
        <dbReference type="ChEBI" id="CHEBI:57844"/>
        <note>ligand shared between two neighboring subunits</note>
    </ligand>
</feature>
<feature type="binding site" description="in other chain" evidence="1">
    <location>
        <begin position="164"/>
        <end position="166"/>
    </location>
    <ligand>
        <name>ATP</name>
        <dbReference type="ChEBI" id="CHEBI:30616"/>
        <note>ligand shared between two neighboring subunits</note>
    </ligand>
</feature>
<feature type="binding site" description="in other chain" evidence="1">
    <location>
        <begin position="230"/>
        <end position="231"/>
    </location>
    <ligand>
        <name>ATP</name>
        <dbReference type="ChEBI" id="CHEBI:30616"/>
        <note>ligand shared between two neighboring subunits</note>
    </ligand>
</feature>
<feature type="binding site" evidence="1">
    <location>
        <position position="239"/>
    </location>
    <ligand>
        <name>ATP</name>
        <dbReference type="ChEBI" id="CHEBI:30616"/>
        <note>ligand shared between two neighboring subunits</note>
    </ligand>
</feature>
<feature type="binding site" evidence="1">
    <location>
        <position position="239"/>
    </location>
    <ligand>
        <name>L-methionine</name>
        <dbReference type="ChEBI" id="CHEBI:57844"/>
        <note>ligand shared between two neighboring subunits</note>
    </ligand>
</feature>
<feature type="binding site" description="in other chain" evidence="1">
    <location>
        <begin position="245"/>
        <end position="246"/>
    </location>
    <ligand>
        <name>ATP</name>
        <dbReference type="ChEBI" id="CHEBI:30616"/>
        <note>ligand shared between two neighboring subunits</note>
    </ligand>
</feature>
<feature type="binding site" evidence="1">
    <location>
        <position position="262"/>
    </location>
    <ligand>
        <name>ATP</name>
        <dbReference type="ChEBI" id="CHEBI:30616"/>
        <note>ligand shared between two neighboring subunits</note>
    </ligand>
</feature>
<feature type="binding site" evidence="1">
    <location>
        <position position="266"/>
    </location>
    <ligand>
        <name>ATP</name>
        <dbReference type="ChEBI" id="CHEBI:30616"/>
        <note>ligand shared between two neighboring subunits</note>
    </ligand>
</feature>
<feature type="binding site" description="in other chain" evidence="1">
    <location>
        <position position="270"/>
    </location>
    <ligand>
        <name>L-methionine</name>
        <dbReference type="ChEBI" id="CHEBI:57844"/>
        <note>ligand shared between two neighboring subunits</note>
    </ligand>
</feature>
<accession>Q5E7R2</accession>
<proteinExistence type="inferred from homology"/>
<keyword id="KW-0067">ATP-binding</keyword>
<keyword id="KW-0963">Cytoplasm</keyword>
<keyword id="KW-0460">Magnesium</keyword>
<keyword id="KW-0479">Metal-binding</keyword>
<keyword id="KW-0547">Nucleotide-binding</keyword>
<keyword id="KW-0554">One-carbon metabolism</keyword>
<keyword id="KW-0630">Potassium</keyword>
<keyword id="KW-1185">Reference proteome</keyword>
<keyword id="KW-0808">Transferase</keyword>
<evidence type="ECO:0000255" key="1">
    <source>
        <dbReference type="HAMAP-Rule" id="MF_00086"/>
    </source>
</evidence>
<gene>
    <name evidence="1" type="primary">metK</name>
    <name type="ordered locus">VF_0439</name>
</gene>
<comment type="function">
    <text evidence="1">Catalyzes the formation of S-adenosylmethionine (AdoMet) from methionine and ATP. The overall synthetic reaction is composed of two sequential steps, AdoMet formation and the subsequent tripolyphosphate hydrolysis which occurs prior to release of AdoMet from the enzyme.</text>
</comment>
<comment type="catalytic activity">
    <reaction evidence="1">
        <text>L-methionine + ATP + H2O = S-adenosyl-L-methionine + phosphate + diphosphate</text>
        <dbReference type="Rhea" id="RHEA:21080"/>
        <dbReference type="ChEBI" id="CHEBI:15377"/>
        <dbReference type="ChEBI" id="CHEBI:30616"/>
        <dbReference type="ChEBI" id="CHEBI:33019"/>
        <dbReference type="ChEBI" id="CHEBI:43474"/>
        <dbReference type="ChEBI" id="CHEBI:57844"/>
        <dbReference type="ChEBI" id="CHEBI:59789"/>
        <dbReference type="EC" id="2.5.1.6"/>
    </reaction>
</comment>
<comment type="cofactor">
    <cofactor evidence="1">
        <name>Mg(2+)</name>
        <dbReference type="ChEBI" id="CHEBI:18420"/>
    </cofactor>
    <text evidence="1">Binds 2 divalent ions per subunit.</text>
</comment>
<comment type="cofactor">
    <cofactor evidence="1">
        <name>K(+)</name>
        <dbReference type="ChEBI" id="CHEBI:29103"/>
    </cofactor>
    <text evidence="1">Binds 1 potassium ion per subunit.</text>
</comment>
<comment type="pathway">
    <text evidence="1">Amino-acid biosynthesis; S-adenosyl-L-methionine biosynthesis; S-adenosyl-L-methionine from L-methionine: step 1/1.</text>
</comment>
<comment type="subunit">
    <text evidence="1">Homotetramer; dimer of dimers.</text>
</comment>
<comment type="subcellular location">
    <subcellularLocation>
        <location evidence="1">Cytoplasm</location>
    </subcellularLocation>
</comment>
<comment type="similarity">
    <text evidence="1">Belongs to the AdoMet synthase family.</text>
</comment>
<protein>
    <recommendedName>
        <fullName evidence="1">S-adenosylmethionine synthase</fullName>
        <shortName evidence="1">AdoMet synthase</shortName>
        <ecNumber evidence="1">2.5.1.6</ecNumber>
    </recommendedName>
    <alternativeName>
        <fullName evidence="1">MAT</fullName>
    </alternativeName>
    <alternativeName>
        <fullName evidence="1">Methionine adenosyltransferase</fullName>
    </alternativeName>
</protein>
<sequence>MAKHLFTSESVSEGHPDKIADQISDAVLDAILEQDPKARVACETYVKTGMVMVGGEVTTSAWVDIEEITRETVREIGYVHSDMGFDANSCAVLNTIGKQSPDINQGVDKADPKEQGAGDQGIMFGYATNETPILMPAPITYSHLLVQKQAEVRKSGKLDFLRPDAKSQVTFQYDQGKIVGIDAVVLSTQHCDSVTTPDLREAVMEEIIKPVLPAEWLNKDTNFFINPTGRFVIGGPMGDCGLTGRKIIVDTYGGAARHGGGAFSGKDPSKVDRSAAYAARYVAKNIVAAGMADRCEIQLSYAIGVADPTSIMVETFGTEKVSHDIIIEAVRQNFDLRPYGLQEMLNLLQPIYKKTAAYGHFGREEFPWEATDKAAILRDFAGIK</sequence>
<organism>
    <name type="scientific">Aliivibrio fischeri (strain ATCC 700601 / ES114)</name>
    <name type="common">Vibrio fischeri</name>
    <dbReference type="NCBI Taxonomy" id="312309"/>
    <lineage>
        <taxon>Bacteria</taxon>
        <taxon>Pseudomonadati</taxon>
        <taxon>Pseudomonadota</taxon>
        <taxon>Gammaproteobacteria</taxon>
        <taxon>Vibrionales</taxon>
        <taxon>Vibrionaceae</taxon>
        <taxon>Aliivibrio</taxon>
    </lineage>
</organism>
<reference key="1">
    <citation type="journal article" date="2005" name="Proc. Natl. Acad. Sci. U.S.A.">
        <title>Complete genome sequence of Vibrio fischeri: a symbiotic bacterium with pathogenic congeners.</title>
        <authorList>
            <person name="Ruby E.G."/>
            <person name="Urbanowski M."/>
            <person name="Campbell J."/>
            <person name="Dunn A."/>
            <person name="Faini M."/>
            <person name="Gunsalus R."/>
            <person name="Lostroh P."/>
            <person name="Lupp C."/>
            <person name="McCann J."/>
            <person name="Millikan D."/>
            <person name="Schaefer A."/>
            <person name="Stabb E."/>
            <person name="Stevens A."/>
            <person name="Visick K."/>
            <person name="Whistler C."/>
            <person name="Greenberg E.P."/>
        </authorList>
    </citation>
    <scope>NUCLEOTIDE SEQUENCE [LARGE SCALE GENOMIC DNA]</scope>
    <source>
        <strain>ATCC 700601 / ES114</strain>
    </source>
</reference>